<protein>
    <recommendedName>
        <fullName evidence="1">Small ribosomal subunit protein bS6</fullName>
    </recommendedName>
    <alternativeName>
        <fullName evidence="2">30S ribosomal protein S6</fullName>
    </alternativeName>
</protein>
<gene>
    <name evidence="1" type="primary">rpsF</name>
    <name type="ordered locus">DSY5036</name>
</gene>
<comment type="function">
    <text evidence="1">Binds together with bS18 to 16S ribosomal RNA.</text>
</comment>
<comment type="similarity">
    <text evidence="1">Belongs to the bacterial ribosomal protein bS6 family.</text>
</comment>
<accession>Q24MB7</accession>
<evidence type="ECO:0000255" key="1">
    <source>
        <dbReference type="HAMAP-Rule" id="MF_00360"/>
    </source>
</evidence>
<evidence type="ECO:0000305" key="2"/>
<feature type="chain" id="PRO_1000005255" description="Small ribosomal subunit protein bS6">
    <location>
        <begin position="1"/>
        <end position="95"/>
    </location>
</feature>
<proteinExistence type="inferred from homology"/>
<organism>
    <name type="scientific">Desulfitobacterium hafniense (strain Y51)</name>
    <dbReference type="NCBI Taxonomy" id="138119"/>
    <lineage>
        <taxon>Bacteria</taxon>
        <taxon>Bacillati</taxon>
        <taxon>Bacillota</taxon>
        <taxon>Clostridia</taxon>
        <taxon>Eubacteriales</taxon>
        <taxon>Desulfitobacteriaceae</taxon>
        <taxon>Desulfitobacterium</taxon>
    </lineage>
</organism>
<reference key="1">
    <citation type="journal article" date="2006" name="J. Bacteriol.">
        <title>Complete genome sequence of the dehalorespiring bacterium Desulfitobacterium hafniense Y51 and comparison with Dehalococcoides ethenogenes 195.</title>
        <authorList>
            <person name="Nonaka H."/>
            <person name="Keresztes G."/>
            <person name="Shinoda Y."/>
            <person name="Ikenaga Y."/>
            <person name="Abe M."/>
            <person name="Naito K."/>
            <person name="Inatomi K."/>
            <person name="Furukawa K."/>
            <person name="Inui M."/>
            <person name="Yukawa H."/>
        </authorList>
    </citation>
    <scope>NUCLEOTIDE SEQUENCE [LARGE SCALE GENOMIC DNA]</scope>
    <source>
        <strain>Y51</strain>
    </source>
</reference>
<sequence length="95" mass="10850">MKAYEVLYVIRPDLDDEAVAATVDKLSEVVTNNGGADVAIDKWGKRRLAYEVNDYREGFYILMNFNGEARTAQEVERIMKISDAVVRFLTTKKED</sequence>
<name>RS6_DESHY</name>
<dbReference type="EMBL" id="AP008230">
    <property type="protein sequence ID" value="BAE86825.1"/>
    <property type="molecule type" value="Genomic_DNA"/>
</dbReference>
<dbReference type="RefSeq" id="WP_011462318.1">
    <property type="nucleotide sequence ID" value="NC_007907.1"/>
</dbReference>
<dbReference type="SMR" id="Q24MB7"/>
<dbReference type="STRING" id="138119.DSY5036"/>
<dbReference type="KEGG" id="dsy:DSY5036"/>
<dbReference type="eggNOG" id="COG0360">
    <property type="taxonomic scope" value="Bacteria"/>
</dbReference>
<dbReference type="HOGENOM" id="CLU_113441_5_3_9"/>
<dbReference type="Proteomes" id="UP000001946">
    <property type="component" value="Chromosome"/>
</dbReference>
<dbReference type="GO" id="GO:0005737">
    <property type="term" value="C:cytoplasm"/>
    <property type="evidence" value="ECO:0007669"/>
    <property type="project" value="UniProtKB-ARBA"/>
</dbReference>
<dbReference type="GO" id="GO:1990904">
    <property type="term" value="C:ribonucleoprotein complex"/>
    <property type="evidence" value="ECO:0007669"/>
    <property type="project" value="UniProtKB-KW"/>
</dbReference>
<dbReference type="GO" id="GO:0005840">
    <property type="term" value="C:ribosome"/>
    <property type="evidence" value="ECO:0007669"/>
    <property type="project" value="UniProtKB-KW"/>
</dbReference>
<dbReference type="GO" id="GO:0070181">
    <property type="term" value="F:small ribosomal subunit rRNA binding"/>
    <property type="evidence" value="ECO:0007669"/>
    <property type="project" value="TreeGrafter"/>
</dbReference>
<dbReference type="GO" id="GO:0003735">
    <property type="term" value="F:structural constituent of ribosome"/>
    <property type="evidence" value="ECO:0007669"/>
    <property type="project" value="InterPro"/>
</dbReference>
<dbReference type="GO" id="GO:0006412">
    <property type="term" value="P:translation"/>
    <property type="evidence" value="ECO:0007669"/>
    <property type="project" value="UniProtKB-UniRule"/>
</dbReference>
<dbReference type="CDD" id="cd00473">
    <property type="entry name" value="bS6"/>
    <property type="match status" value="1"/>
</dbReference>
<dbReference type="Gene3D" id="3.30.70.60">
    <property type="match status" value="1"/>
</dbReference>
<dbReference type="HAMAP" id="MF_00360">
    <property type="entry name" value="Ribosomal_bS6"/>
    <property type="match status" value="1"/>
</dbReference>
<dbReference type="InterPro" id="IPR000529">
    <property type="entry name" value="Ribosomal_bS6"/>
</dbReference>
<dbReference type="InterPro" id="IPR035980">
    <property type="entry name" value="Ribosomal_bS6_sf"/>
</dbReference>
<dbReference type="InterPro" id="IPR020814">
    <property type="entry name" value="Ribosomal_S6_plastid/chlpt"/>
</dbReference>
<dbReference type="InterPro" id="IPR014717">
    <property type="entry name" value="Transl_elong_EF1B/ribsomal_bS6"/>
</dbReference>
<dbReference type="NCBIfam" id="TIGR00166">
    <property type="entry name" value="S6"/>
    <property type="match status" value="1"/>
</dbReference>
<dbReference type="PANTHER" id="PTHR21011">
    <property type="entry name" value="MITOCHONDRIAL 28S RIBOSOMAL PROTEIN S6"/>
    <property type="match status" value="1"/>
</dbReference>
<dbReference type="PANTHER" id="PTHR21011:SF1">
    <property type="entry name" value="SMALL RIBOSOMAL SUBUNIT PROTEIN BS6M"/>
    <property type="match status" value="1"/>
</dbReference>
<dbReference type="Pfam" id="PF01250">
    <property type="entry name" value="Ribosomal_S6"/>
    <property type="match status" value="1"/>
</dbReference>
<dbReference type="SUPFAM" id="SSF54995">
    <property type="entry name" value="Ribosomal protein S6"/>
    <property type="match status" value="1"/>
</dbReference>
<keyword id="KW-1185">Reference proteome</keyword>
<keyword id="KW-0687">Ribonucleoprotein</keyword>
<keyword id="KW-0689">Ribosomal protein</keyword>
<keyword id="KW-0694">RNA-binding</keyword>
<keyword id="KW-0699">rRNA-binding</keyword>